<comment type="function">
    <text evidence="1">Acts as a chaperone.</text>
</comment>
<comment type="induction">
    <text evidence="1">By stress conditions e.g. heat shock.</text>
</comment>
<comment type="similarity">
    <text evidence="1">Belongs to the heat shock protein 70 family.</text>
</comment>
<dbReference type="EMBL" id="CP001252">
    <property type="protein sequence ID" value="ACK45557.1"/>
    <property type="molecule type" value="Genomic_DNA"/>
</dbReference>
<dbReference type="RefSeq" id="WP_012586981.1">
    <property type="nucleotide sequence ID" value="NC_011663.1"/>
</dbReference>
<dbReference type="SMR" id="B8E4S1"/>
<dbReference type="KEGG" id="sbp:Sbal223_1042"/>
<dbReference type="HOGENOM" id="CLU_005965_2_1_6"/>
<dbReference type="Proteomes" id="UP000002507">
    <property type="component" value="Chromosome"/>
</dbReference>
<dbReference type="GO" id="GO:0005524">
    <property type="term" value="F:ATP binding"/>
    <property type="evidence" value="ECO:0007669"/>
    <property type="project" value="UniProtKB-UniRule"/>
</dbReference>
<dbReference type="GO" id="GO:0140662">
    <property type="term" value="F:ATP-dependent protein folding chaperone"/>
    <property type="evidence" value="ECO:0007669"/>
    <property type="project" value="InterPro"/>
</dbReference>
<dbReference type="GO" id="GO:0051082">
    <property type="term" value="F:unfolded protein binding"/>
    <property type="evidence" value="ECO:0007669"/>
    <property type="project" value="InterPro"/>
</dbReference>
<dbReference type="CDD" id="cd10234">
    <property type="entry name" value="ASKHA_NBD_HSP70_DnaK-like"/>
    <property type="match status" value="1"/>
</dbReference>
<dbReference type="FunFam" id="2.60.34.10:FF:000014">
    <property type="entry name" value="Chaperone protein DnaK HSP70"/>
    <property type="match status" value="1"/>
</dbReference>
<dbReference type="FunFam" id="3.30.30.30:FF:000003">
    <property type="entry name" value="Heat shock protein 9"/>
    <property type="match status" value="1"/>
</dbReference>
<dbReference type="FunFam" id="1.20.1270.10:FF:000001">
    <property type="entry name" value="Molecular chaperone DnaK"/>
    <property type="match status" value="1"/>
</dbReference>
<dbReference type="FunFam" id="3.30.420.40:FF:000004">
    <property type="entry name" value="Molecular chaperone DnaK"/>
    <property type="match status" value="1"/>
</dbReference>
<dbReference type="FunFam" id="3.90.640.10:FF:000003">
    <property type="entry name" value="Molecular chaperone DnaK"/>
    <property type="match status" value="1"/>
</dbReference>
<dbReference type="Gene3D" id="1.20.1270.10">
    <property type="match status" value="1"/>
</dbReference>
<dbReference type="Gene3D" id="3.30.420.40">
    <property type="match status" value="2"/>
</dbReference>
<dbReference type="Gene3D" id="3.90.640.10">
    <property type="entry name" value="Actin, Chain A, domain 4"/>
    <property type="match status" value="1"/>
</dbReference>
<dbReference type="Gene3D" id="2.60.34.10">
    <property type="entry name" value="Substrate Binding Domain Of DNAk, Chain A, domain 1"/>
    <property type="match status" value="1"/>
</dbReference>
<dbReference type="HAMAP" id="MF_00332">
    <property type="entry name" value="DnaK"/>
    <property type="match status" value="1"/>
</dbReference>
<dbReference type="InterPro" id="IPR043129">
    <property type="entry name" value="ATPase_NBD"/>
</dbReference>
<dbReference type="InterPro" id="IPR012725">
    <property type="entry name" value="Chaperone_DnaK"/>
</dbReference>
<dbReference type="InterPro" id="IPR018181">
    <property type="entry name" value="Heat_shock_70_CS"/>
</dbReference>
<dbReference type="InterPro" id="IPR029048">
    <property type="entry name" value="HSP70_C_sf"/>
</dbReference>
<dbReference type="InterPro" id="IPR029047">
    <property type="entry name" value="HSP70_peptide-bd_sf"/>
</dbReference>
<dbReference type="InterPro" id="IPR013126">
    <property type="entry name" value="Hsp_70_fam"/>
</dbReference>
<dbReference type="NCBIfam" id="NF001413">
    <property type="entry name" value="PRK00290.1"/>
    <property type="match status" value="1"/>
</dbReference>
<dbReference type="NCBIfam" id="NF003520">
    <property type="entry name" value="PRK05183.1"/>
    <property type="match status" value="1"/>
</dbReference>
<dbReference type="NCBIfam" id="TIGR02350">
    <property type="entry name" value="prok_dnaK"/>
    <property type="match status" value="1"/>
</dbReference>
<dbReference type="PANTHER" id="PTHR19375">
    <property type="entry name" value="HEAT SHOCK PROTEIN 70KDA"/>
    <property type="match status" value="1"/>
</dbReference>
<dbReference type="Pfam" id="PF00012">
    <property type="entry name" value="HSP70"/>
    <property type="match status" value="1"/>
</dbReference>
<dbReference type="PRINTS" id="PR00301">
    <property type="entry name" value="HEATSHOCK70"/>
</dbReference>
<dbReference type="SUPFAM" id="SSF53067">
    <property type="entry name" value="Actin-like ATPase domain"/>
    <property type="match status" value="2"/>
</dbReference>
<dbReference type="SUPFAM" id="SSF100920">
    <property type="entry name" value="Heat shock protein 70kD (HSP70), peptide-binding domain"/>
    <property type="match status" value="1"/>
</dbReference>
<dbReference type="PROSITE" id="PS00297">
    <property type="entry name" value="HSP70_1"/>
    <property type="match status" value="1"/>
</dbReference>
<dbReference type="PROSITE" id="PS00329">
    <property type="entry name" value="HSP70_2"/>
    <property type="match status" value="1"/>
</dbReference>
<dbReference type="PROSITE" id="PS01036">
    <property type="entry name" value="HSP70_3"/>
    <property type="match status" value="1"/>
</dbReference>
<reference key="1">
    <citation type="submission" date="2008-12" db="EMBL/GenBank/DDBJ databases">
        <title>Complete sequence of chromosome of Shewanella baltica OS223.</title>
        <authorList>
            <consortium name="US DOE Joint Genome Institute"/>
            <person name="Lucas S."/>
            <person name="Copeland A."/>
            <person name="Lapidus A."/>
            <person name="Glavina del Rio T."/>
            <person name="Dalin E."/>
            <person name="Tice H."/>
            <person name="Bruce D."/>
            <person name="Goodwin L."/>
            <person name="Pitluck S."/>
            <person name="Chertkov O."/>
            <person name="Meincke L."/>
            <person name="Brettin T."/>
            <person name="Detter J.C."/>
            <person name="Han C."/>
            <person name="Kuske C.R."/>
            <person name="Larimer F."/>
            <person name="Land M."/>
            <person name="Hauser L."/>
            <person name="Kyrpides N."/>
            <person name="Ovchinnikova G."/>
            <person name="Brettar I."/>
            <person name="Rodrigues J."/>
            <person name="Konstantinidis K."/>
            <person name="Tiedje J."/>
        </authorList>
    </citation>
    <scope>NUCLEOTIDE SEQUENCE [LARGE SCALE GENOMIC DNA]</scope>
    <source>
        <strain>OS223</strain>
    </source>
</reference>
<feature type="chain" id="PRO_1000133159" description="Chaperone protein DnaK">
    <location>
        <begin position="1"/>
        <end position="639"/>
    </location>
</feature>
<feature type="region of interest" description="Disordered" evidence="2">
    <location>
        <begin position="604"/>
        <end position="639"/>
    </location>
</feature>
<feature type="compositionally biased region" description="Low complexity" evidence="2">
    <location>
        <begin position="606"/>
        <end position="624"/>
    </location>
</feature>
<feature type="compositionally biased region" description="Acidic residues" evidence="2">
    <location>
        <begin position="625"/>
        <end position="639"/>
    </location>
</feature>
<feature type="modified residue" description="Phosphothreonine; by autocatalysis" evidence="1">
    <location>
        <position position="198"/>
    </location>
</feature>
<name>DNAK_SHEB2</name>
<sequence length="639" mass="68929">MGKIIGIDLGTTNSCVAVLDGGKARVLENAEGDRTTPSIIAYTDDETIVGSPAKRQAVTNPTNTFFAIKRLIGRRFKDDEVQRDVNIMPFKIIAADNGDAWVESRGNKMAPPQVSAEILKKMKKTAEDFLGEEVTEAVITVPAYFNDSQRQATKDAGRIAGLDVKRIINEPTAAALAYGIDKKQGDNIVAVYDLGGGTFDISIIEIDSNDGDQTFEVLATNGDTHLGGEDFDNRLINYLADEFKKEQGLDLRKDPLAMQRLKEAAEKAKIELSSTNHTEVNLPYITADATGPKHLVIKITRAKLESLVEDLILRTLEPLKVALADADLSVTDINEVILVGGQTRMPKVQEAVTNFFGKEPRKDVNPDEAVAVGAAIQAGVLSGDVKDVLLLDVTPLSLGIETMGSVMTKLIEKNTTIPTKAQQVFSTADDNQSAVTIHVLQGERKQASANKSLGQFNLDGIEPAQRGQPQIEVMFDIDADGILHVSATDKKTGKKQNITIKASSGLSEEEVAQMVRDAEAHADEDKKFEELVQSRNQADGLVHATKKQVEEAGDALPSEDKEKIQAAMDAVDTAIKGNDKEAIEKATQNLIEASAKLMEIAQAKSQAQGGDNADAGKQANAAADDVVDAEFEEVKDDKK</sequence>
<organism>
    <name type="scientific">Shewanella baltica (strain OS223)</name>
    <dbReference type="NCBI Taxonomy" id="407976"/>
    <lineage>
        <taxon>Bacteria</taxon>
        <taxon>Pseudomonadati</taxon>
        <taxon>Pseudomonadota</taxon>
        <taxon>Gammaproteobacteria</taxon>
        <taxon>Alteromonadales</taxon>
        <taxon>Shewanellaceae</taxon>
        <taxon>Shewanella</taxon>
    </lineage>
</organism>
<gene>
    <name evidence="1" type="primary">dnaK</name>
    <name type="ordered locus">Sbal223_1042</name>
</gene>
<keyword id="KW-0067">ATP-binding</keyword>
<keyword id="KW-0143">Chaperone</keyword>
<keyword id="KW-0547">Nucleotide-binding</keyword>
<keyword id="KW-0597">Phosphoprotein</keyword>
<keyword id="KW-0346">Stress response</keyword>
<protein>
    <recommendedName>
        <fullName evidence="1">Chaperone protein DnaK</fullName>
    </recommendedName>
    <alternativeName>
        <fullName evidence="1">HSP70</fullName>
    </alternativeName>
    <alternativeName>
        <fullName evidence="1">Heat shock 70 kDa protein</fullName>
    </alternativeName>
    <alternativeName>
        <fullName evidence="1">Heat shock protein 70</fullName>
    </alternativeName>
</protein>
<proteinExistence type="inferred from homology"/>
<evidence type="ECO:0000255" key="1">
    <source>
        <dbReference type="HAMAP-Rule" id="MF_00332"/>
    </source>
</evidence>
<evidence type="ECO:0000256" key="2">
    <source>
        <dbReference type="SAM" id="MobiDB-lite"/>
    </source>
</evidence>
<accession>B8E4S1</accession>